<evidence type="ECO:0000255" key="1">
    <source>
        <dbReference type="HAMAP-Rule" id="MF_01631"/>
    </source>
</evidence>
<keyword id="KW-0012">Acyltransferase</keyword>
<keyword id="KW-0133">Cell shape</keyword>
<keyword id="KW-0961">Cell wall biogenesis/degradation</keyword>
<keyword id="KW-0963">Cytoplasm</keyword>
<keyword id="KW-0460">Magnesium</keyword>
<keyword id="KW-0479">Metal-binding</keyword>
<keyword id="KW-0511">Multifunctional enzyme</keyword>
<keyword id="KW-0548">Nucleotidyltransferase</keyword>
<keyword id="KW-0573">Peptidoglycan synthesis</keyword>
<keyword id="KW-1185">Reference proteome</keyword>
<keyword id="KW-0677">Repeat</keyword>
<keyword id="KW-0808">Transferase</keyword>
<sequence>MLDILILAAGKGTRMRSDLPKVLHPIGGKPLVQHVVDTARQVGGEQLLLIVGHGAEQVEQRMAAPDVKFVVQAQQLGTGHAVQQALPHLRPEATVLILYGDVPLTRAATLQKLVAGVTDQQMALLTVDLPDPSGYGRIVRDTSGAVVAIVEHKDASDEQRLICEINTGIMAVKARHLQQWLPRLGNNNAQGEYYLTDIIAMAKADGVAIHVEQPGAIQEVEGINNRQQQATLERYYQQQQARALMDAGVTLLDPARFDCRGNLSAGRDVVIDINCVIEGEVVLGDGVVIEPNCIIINSKIGNNTHIKAFSHIEDAVIAADCDIGPYARLRPGTNLADAVKIGNFVETKKAVIAKGSKVNHLSYIGDARVGSGVNVGAGTITCNYDGVNKFKTEIGDNAFIGSNSALVAPVNIGAGATVGAGSVITRDVDAAELAVARGKQRNIQGWERPTRKS</sequence>
<comment type="function">
    <text evidence="1">Catalyzes the last two sequential reactions in the de novo biosynthetic pathway for UDP-N-acetylglucosamine (UDP-GlcNAc). The C-terminal domain catalyzes the transfer of acetyl group from acetyl coenzyme A to glucosamine-1-phosphate (GlcN-1-P) to produce N-acetylglucosamine-1-phosphate (GlcNAc-1-P), which is converted into UDP-GlcNAc by the transfer of uridine 5-monophosphate (from uridine 5-triphosphate), a reaction catalyzed by the N-terminal domain.</text>
</comment>
<comment type="catalytic activity">
    <reaction evidence="1">
        <text>alpha-D-glucosamine 1-phosphate + acetyl-CoA = N-acetyl-alpha-D-glucosamine 1-phosphate + CoA + H(+)</text>
        <dbReference type="Rhea" id="RHEA:13725"/>
        <dbReference type="ChEBI" id="CHEBI:15378"/>
        <dbReference type="ChEBI" id="CHEBI:57287"/>
        <dbReference type="ChEBI" id="CHEBI:57288"/>
        <dbReference type="ChEBI" id="CHEBI:57776"/>
        <dbReference type="ChEBI" id="CHEBI:58516"/>
        <dbReference type="EC" id="2.3.1.157"/>
    </reaction>
</comment>
<comment type="catalytic activity">
    <reaction evidence="1">
        <text>N-acetyl-alpha-D-glucosamine 1-phosphate + UTP + H(+) = UDP-N-acetyl-alpha-D-glucosamine + diphosphate</text>
        <dbReference type="Rhea" id="RHEA:13509"/>
        <dbReference type="ChEBI" id="CHEBI:15378"/>
        <dbReference type="ChEBI" id="CHEBI:33019"/>
        <dbReference type="ChEBI" id="CHEBI:46398"/>
        <dbReference type="ChEBI" id="CHEBI:57705"/>
        <dbReference type="ChEBI" id="CHEBI:57776"/>
        <dbReference type="EC" id="2.7.7.23"/>
    </reaction>
</comment>
<comment type="cofactor">
    <cofactor evidence="1">
        <name>Mg(2+)</name>
        <dbReference type="ChEBI" id="CHEBI:18420"/>
    </cofactor>
    <text evidence="1">Binds 1 Mg(2+) ion per subunit.</text>
</comment>
<comment type="pathway">
    <text evidence="1">Nucleotide-sugar biosynthesis; UDP-N-acetyl-alpha-D-glucosamine biosynthesis; N-acetyl-alpha-D-glucosamine 1-phosphate from alpha-D-glucosamine 6-phosphate (route II): step 2/2.</text>
</comment>
<comment type="pathway">
    <text evidence="1">Nucleotide-sugar biosynthesis; UDP-N-acetyl-alpha-D-glucosamine biosynthesis; UDP-N-acetyl-alpha-D-glucosamine from N-acetyl-alpha-D-glucosamine 1-phosphate: step 1/1.</text>
</comment>
<comment type="pathway">
    <text evidence="1">Bacterial outer membrane biogenesis; LPS lipid A biosynthesis.</text>
</comment>
<comment type="subunit">
    <text evidence="1">Homotrimer.</text>
</comment>
<comment type="subcellular location">
    <subcellularLocation>
        <location evidence="1">Cytoplasm</location>
    </subcellularLocation>
</comment>
<comment type="similarity">
    <text evidence="1">In the N-terminal section; belongs to the N-acetylglucosamine-1-phosphate uridyltransferase family.</text>
</comment>
<comment type="similarity">
    <text evidence="1">In the C-terminal section; belongs to the transferase hexapeptide repeat family.</text>
</comment>
<organism>
    <name type="scientific">Cellvibrio japonicus (strain Ueda107)</name>
    <name type="common">Pseudomonas fluorescens subsp. cellulosa</name>
    <dbReference type="NCBI Taxonomy" id="498211"/>
    <lineage>
        <taxon>Bacteria</taxon>
        <taxon>Pseudomonadati</taxon>
        <taxon>Pseudomonadota</taxon>
        <taxon>Gammaproteobacteria</taxon>
        <taxon>Cellvibrionales</taxon>
        <taxon>Cellvibrionaceae</taxon>
        <taxon>Cellvibrio</taxon>
    </lineage>
</organism>
<feature type="chain" id="PRO_1000186423" description="Bifunctional protein GlmU">
    <location>
        <begin position="1"/>
        <end position="453"/>
    </location>
</feature>
<feature type="region of interest" description="Pyrophosphorylase" evidence="1">
    <location>
        <begin position="1"/>
        <end position="226"/>
    </location>
</feature>
<feature type="region of interest" description="Linker" evidence="1">
    <location>
        <begin position="227"/>
        <end position="247"/>
    </location>
</feature>
<feature type="region of interest" description="N-acetyltransferase" evidence="1">
    <location>
        <begin position="248"/>
        <end position="453"/>
    </location>
</feature>
<feature type="active site" description="Proton acceptor" evidence="1">
    <location>
        <position position="360"/>
    </location>
</feature>
<feature type="binding site" evidence="1">
    <location>
        <begin position="7"/>
        <end position="10"/>
    </location>
    <ligand>
        <name>UDP-N-acetyl-alpha-D-glucosamine</name>
        <dbReference type="ChEBI" id="CHEBI:57705"/>
    </ligand>
</feature>
<feature type="binding site" evidence="1">
    <location>
        <position position="21"/>
    </location>
    <ligand>
        <name>UDP-N-acetyl-alpha-D-glucosamine</name>
        <dbReference type="ChEBI" id="CHEBI:57705"/>
    </ligand>
</feature>
<feature type="binding site" evidence="1">
    <location>
        <position position="72"/>
    </location>
    <ligand>
        <name>UDP-N-acetyl-alpha-D-glucosamine</name>
        <dbReference type="ChEBI" id="CHEBI:57705"/>
    </ligand>
</feature>
<feature type="binding site" evidence="1">
    <location>
        <begin position="77"/>
        <end position="78"/>
    </location>
    <ligand>
        <name>UDP-N-acetyl-alpha-D-glucosamine</name>
        <dbReference type="ChEBI" id="CHEBI:57705"/>
    </ligand>
</feature>
<feature type="binding site" evidence="1">
    <location>
        <begin position="99"/>
        <end position="101"/>
    </location>
    <ligand>
        <name>UDP-N-acetyl-alpha-D-glucosamine</name>
        <dbReference type="ChEBI" id="CHEBI:57705"/>
    </ligand>
</feature>
<feature type="binding site" evidence="1">
    <location>
        <position position="101"/>
    </location>
    <ligand>
        <name>Mg(2+)</name>
        <dbReference type="ChEBI" id="CHEBI:18420"/>
    </ligand>
</feature>
<feature type="binding site" evidence="1">
    <location>
        <position position="136"/>
    </location>
    <ligand>
        <name>UDP-N-acetyl-alpha-D-glucosamine</name>
        <dbReference type="ChEBI" id="CHEBI:57705"/>
    </ligand>
</feature>
<feature type="binding site" evidence="1">
    <location>
        <position position="151"/>
    </location>
    <ligand>
        <name>UDP-N-acetyl-alpha-D-glucosamine</name>
        <dbReference type="ChEBI" id="CHEBI:57705"/>
    </ligand>
</feature>
<feature type="binding site" evidence="1">
    <location>
        <position position="166"/>
    </location>
    <ligand>
        <name>UDP-N-acetyl-alpha-D-glucosamine</name>
        <dbReference type="ChEBI" id="CHEBI:57705"/>
    </ligand>
</feature>
<feature type="binding site" evidence="1">
    <location>
        <position position="224"/>
    </location>
    <ligand>
        <name>Mg(2+)</name>
        <dbReference type="ChEBI" id="CHEBI:18420"/>
    </ligand>
</feature>
<feature type="binding site" evidence="1">
    <location>
        <position position="224"/>
    </location>
    <ligand>
        <name>UDP-N-acetyl-alpha-D-glucosamine</name>
        <dbReference type="ChEBI" id="CHEBI:57705"/>
    </ligand>
</feature>
<feature type="binding site" evidence="1">
    <location>
        <position position="330"/>
    </location>
    <ligand>
        <name>UDP-N-acetyl-alpha-D-glucosamine</name>
        <dbReference type="ChEBI" id="CHEBI:57705"/>
    </ligand>
</feature>
<feature type="binding site" evidence="1">
    <location>
        <position position="348"/>
    </location>
    <ligand>
        <name>UDP-N-acetyl-alpha-D-glucosamine</name>
        <dbReference type="ChEBI" id="CHEBI:57705"/>
    </ligand>
</feature>
<feature type="binding site" evidence="1">
    <location>
        <position position="363"/>
    </location>
    <ligand>
        <name>UDP-N-acetyl-alpha-D-glucosamine</name>
        <dbReference type="ChEBI" id="CHEBI:57705"/>
    </ligand>
</feature>
<feature type="binding site" evidence="1">
    <location>
        <position position="374"/>
    </location>
    <ligand>
        <name>UDP-N-acetyl-alpha-D-glucosamine</name>
        <dbReference type="ChEBI" id="CHEBI:57705"/>
    </ligand>
</feature>
<feature type="binding site" evidence="1">
    <location>
        <position position="377"/>
    </location>
    <ligand>
        <name>acetyl-CoA</name>
        <dbReference type="ChEBI" id="CHEBI:57288"/>
    </ligand>
</feature>
<feature type="binding site" evidence="1">
    <location>
        <begin position="383"/>
        <end position="384"/>
    </location>
    <ligand>
        <name>acetyl-CoA</name>
        <dbReference type="ChEBI" id="CHEBI:57288"/>
    </ligand>
</feature>
<feature type="binding site" evidence="1">
    <location>
        <position position="402"/>
    </location>
    <ligand>
        <name>acetyl-CoA</name>
        <dbReference type="ChEBI" id="CHEBI:57288"/>
    </ligand>
</feature>
<feature type="binding site" evidence="1">
    <location>
        <position position="420"/>
    </location>
    <ligand>
        <name>acetyl-CoA</name>
        <dbReference type="ChEBI" id="CHEBI:57288"/>
    </ligand>
</feature>
<feature type="binding site" evidence="1">
    <location>
        <position position="437"/>
    </location>
    <ligand>
        <name>acetyl-CoA</name>
        <dbReference type="ChEBI" id="CHEBI:57288"/>
    </ligand>
</feature>
<dbReference type="EC" id="2.7.7.23" evidence="1"/>
<dbReference type="EC" id="2.3.1.157" evidence="1"/>
<dbReference type="EMBL" id="CP000934">
    <property type="protein sequence ID" value="ACE83029.1"/>
    <property type="molecule type" value="Genomic_DNA"/>
</dbReference>
<dbReference type="RefSeq" id="WP_012489369.1">
    <property type="nucleotide sequence ID" value="NC_010995.1"/>
</dbReference>
<dbReference type="SMR" id="B3PIS4"/>
<dbReference type="STRING" id="498211.CJA_3806"/>
<dbReference type="KEGG" id="cja:CJA_3806"/>
<dbReference type="eggNOG" id="COG1207">
    <property type="taxonomic scope" value="Bacteria"/>
</dbReference>
<dbReference type="HOGENOM" id="CLU_029499_15_2_6"/>
<dbReference type="OrthoDB" id="9775031at2"/>
<dbReference type="UniPathway" id="UPA00113">
    <property type="reaction ID" value="UER00532"/>
</dbReference>
<dbReference type="UniPathway" id="UPA00113">
    <property type="reaction ID" value="UER00533"/>
</dbReference>
<dbReference type="UniPathway" id="UPA00973"/>
<dbReference type="Proteomes" id="UP000001036">
    <property type="component" value="Chromosome"/>
</dbReference>
<dbReference type="GO" id="GO:0005737">
    <property type="term" value="C:cytoplasm"/>
    <property type="evidence" value="ECO:0007669"/>
    <property type="project" value="UniProtKB-SubCell"/>
</dbReference>
<dbReference type="GO" id="GO:0016020">
    <property type="term" value="C:membrane"/>
    <property type="evidence" value="ECO:0007669"/>
    <property type="project" value="GOC"/>
</dbReference>
<dbReference type="GO" id="GO:0019134">
    <property type="term" value="F:glucosamine-1-phosphate N-acetyltransferase activity"/>
    <property type="evidence" value="ECO:0007669"/>
    <property type="project" value="UniProtKB-UniRule"/>
</dbReference>
<dbReference type="GO" id="GO:0000287">
    <property type="term" value="F:magnesium ion binding"/>
    <property type="evidence" value="ECO:0007669"/>
    <property type="project" value="UniProtKB-UniRule"/>
</dbReference>
<dbReference type="GO" id="GO:0003977">
    <property type="term" value="F:UDP-N-acetylglucosamine diphosphorylase activity"/>
    <property type="evidence" value="ECO:0007669"/>
    <property type="project" value="UniProtKB-UniRule"/>
</dbReference>
<dbReference type="GO" id="GO:0000902">
    <property type="term" value="P:cell morphogenesis"/>
    <property type="evidence" value="ECO:0007669"/>
    <property type="project" value="UniProtKB-UniRule"/>
</dbReference>
<dbReference type="GO" id="GO:0071555">
    <property type="term" value="P:cell wall organization"/>
    <property type="evidence" value="ECO:0007669"/>
    <property type="project" value="UniProtKB-KW"/>
</dbReference>
<dbReference type="GO" id="GO:0009245">
    <property type="term" value="P:lipid A biosynthetic process"/>
    <property type="evidence" value="ECO:0007669"/>
    <property type="project" value="UniProtKB-UniRule"/>
</dbReference>
<dbReference type="GO" id="GO:0009252">
    <property type="term" value="P:peptidoglycan biosynthetic process"/>
    <property type="evidence" value="ECO:0007669"/>
    <property type="project" value="UniProtKB-UniRule"/>
</dbReference>
<dbReference type="GO" id="GO:0008360">
    <property type="term" value="P:regulation of cell shape"/>
    <property type="evidence" value="ECO:0007669"/>
    <property type="project" value="UniProtKB-KW"/>
</dbReference>
<dbReference type="GO" id="GO:0006048">
    <property type="term" value="P:UDP-N-acetylglucosamine biosynthetic process"/>
    <property type="evidence" value="ECO:0007669"/>
    <property type="project" value="UniProtKB-UniPathway"/>
</dbReference>
<dbReference type="CDD" id="cd02540">
    <property type="entry name" value="GT2_GlmU_N_bac"/>
    <property type="match status" value="1"/>
</dbReference>
<dbReference type="CDD" id="cd03353">
    <property type="entry name" value="LbH_GlmU_C"/>
    <property type="match status" value="1"/>
</dbReference>
<dbReference type="Gene3D" id="2.160.10.10">
    <property type="entry name" value="Hexapeptide repeat proteins"/>
    <property type="match status" value="1"/>
</dbReference>
<dbReference type="Gene3D" id="3.90.550.10">
    <property type="entry name" value="Spore Coat Polysaccharide Biosynthesis Protein SpsA, Chain A"/>
    <property type="match status" value="1"/>
</dbReference>
<dbReference type="HAMAP" id="MF_01631">
    <property type="entry name" value="GlmU"/>
    <property type="match status" value="1"/>
</dbReference>
<dbReference type="InterPro" id="IPR005882">
    <property type="entry name" value="Bifunctional_GlmU"/>
</dbReference>
<dbReference type="InterPro" id="IPR050065">
    <property type="entry name" value="GlmU-like"/>
</dbReference>
<dbReference type="InterPro" id="IPR038009">
    <property type="entry name" value="GlmU_C_LbH"/>
</dbReference>
<dbReference type="InterPro" id="IPR001451">
    <property type="entry name" value="Hexapep"/>
</dbReference>
<dbReference type="InterPro" id="IPR018357">
    <property type="entry name" value="Hexapep_transf_CS"/>
</dbReference>
<dbReference type="InterPro" id="IPR025877">
    <property type="entry name" value="MobA-like_NTP_Trfase"/>
</dbReference>
<dbReference type="InterPro" id="IPR029044">
    <property type="entry name" value="Nucleotide-diphossugar_trans"/>
</dbReference>
<dbReference type="InterPro" id="IPR011004">
    <property type="entry name" value="Trimer_LpxA-like_sf"/>
</dbReference>
<dbReference type="NCBIfam" id="TIGR01173">
    <property type="entry name" value="glmU"/>
    <property type="match status" value="1"/>
</dbReference>
<dbReference type="NCBIfam" id="NF010933">
    <property type="entry name" value="PRK14353.1"/>
    <property type="match status" value="1"/>
</dbReference>
<dbReference type="PANTHER" id="PTHR43584:SF3">
    <property type="entry name" value="BIFUNCTIONAL PROTEIN GLMU"/>
    <property type="match status" value="1"/>
</dbReference>
<dbReference type="PANTHER" id="PTHR43584">
    <property type="entry name" value="NUCLEOTIDYL TRANSFERASE"/>
    <property type="match status" value="1"/>
</dbReference>
<dbReference type="Pfam" id="PF14602">
    <property type="entry name" value="Hexapep_2"/>
    <property type="match status" value="1"/>
</dbReference>
<dbReference type="Pfam" id="PF12804">
    <property type="entry name" value="NTP_transf_3"/>
    <property type="match status" value="1"/>
</dbReference>
<dbReference type="SUPFAM" id="SSF53448">
    <property type="entry name" value="Nucleotide-diphospho-sugar transferases"/>
    <property type="match status" value="1"/>
</dbReference>
<dbReference type="SUPFAM" id="SSF51161">
    <property type="entry name" value="Trimeric LpxA-like enzymes"/>
    <property type="match status" value="1"/>
</dbReference>
<dbReference type="PROSITE" id="PS00101">
    <property type="entry name" value="HEXAPEP_TRANSFERASES"/>
    <property type="match status" value="1"/>
</dbReference>
<proteinExistence type="inferred from homology"/>
<accession>B3PIS4</accession>
<name>GLMU_CELJU</name>
<reference key="1">
    <citation type="journal article" date="2008" name="J. Bacteriol.">
        <title>Insights into plant cell wall degradation from the genome sequence of the soil bacterium Cellvibrio japonicus.</title>
        <authorList>
            <person name="DeBoy R.T."/>
            <person name="Mongodin E.F."/>
            <person name="Fouts D.E."/>
            <person name="Tailford L.E."/>
            <person name="Khouri H."/>
            <person name="Emerson J.B."/>
            <person name="Mohamoud Y."/>
            <person name="Watkins K."/>
            <person name="Henrissat B."/>
            <person name="Gilbert H.J."/>
            <person name="Nelson K.E."/>
        </authorList>
    </citation>
    <scope>NUCLEOTIDE SEQUENCE [LARGE SCALE GENOMIC DNA]</scope>
    <source>
        <strain>Ueda107</strain>
    </source>
</reference>
<protein>
    <recommendedName>
        <fullName evidence="1">Bifunctional protein GlmU</fullName>
    </recommendedName>
    <domain>
        <recommendedName>
            <fullName evidence="1">UDP-N-acetylglucosamine pyrophosphorylase</fullName>
            <ecNumber evidence="1">2.7.7.23</ecNumber>
        </recommendedName>
        <alternativeName>
            <fullName evidence="1">N-acetylglucosamine-1-phosphate uridyltransferase</fullName>
        </alternativeName>
    </domain>
    <domain>
        <recommendedName>
            <fullName evidence="1">Glucosamine-1-phosphate N-acetyltransferase</fullName>
            <ecNumber evidence="1">2.3.1.157</ecNumber>
        </recommendedName>
    </domain>
</protein>
<gene>
    <name evidence="1" type="primary">glmU</name>
    <name type="ordered locus">CJA_3806</name>
</gene>